<accession>Q7V5A5</accession>
<protein>
    <recommendedName>
        <fullName evidence="1">Transcriptional repressor NrdR</fullName>
    </recommendedName>
</protein>
<reference key="1">
    <citation type="journal article" date="2003" name="Nature">
        <title>Genome divergence in two Prochlorococcus ecotypes reflects oceanic niche differentiation.</title>
        <authorList>
            <person name="Rocap G."/>
            <person name="Larimer F.W."/>
            <person name="Lamerdin J.E."/>
            <person name="Malfatti S."/>
            <person name="Chain P."/>
            <person name="Ahlgren N.A."/>
            <person name="Arellano A."/>
            <person name="Coleman M."/>
            <person name="Hauser L."/>
            <person name="Hess W.R."/>
            <person name="Johnson Z.I."/>
            <person name="Land M.L."/>
            <person name="Lindell D."/>
            <person name="Post A.F."/>
            <person name="Regala W."/>
            <person name="Shah M."/>
            <person name="Shaw S.L."/>
            <person name="Steglich C."/>
            <person name="Sullivan M.B."/>
            <person name="Ting C.S."/>
            <person name="Tolonen A."/>
            <person name="Webb E.A."/>
            <person name="Zinser E.R."/>
            <person name="Chisholm S.W."/>
        </authorList>
    </citation>
    <scope>NUCLEOTIDE SEQUENCE [LARGE SCALE GENOMIC DNA]</scope>
    <source>
        <strain>MIT 9313</strain>
    </source>
</reference>
<name>NRDR_PROMM</name>
<dbReference type="EMBL" id="BX548175">
    <property type="protein sequence ID" value="CAE21842.1"/>
    <property type="molecule type" value="Genomic_DNA"/>
</dbReference>
<dbReference type="RefSeq" id="WP_011131034.1">
    <property type="nucleotide sequence ID" value="NC_005071.1"/>
</dbReference>
<dbReference type="SMR" id="Q7V5A5"/>
<dbReference type="KEGG" id="pmt:PMT_1667"/>
<dbReference type="eggNOG" id="COG1327">
    <property type="taxonomic scope" value="Bacteria"/>
</dbReference>
<dbReference type="HOGENOM" id="CLU_108412_0_0_3"/>
<dbReference type="OrthoDB" id="9807461at2"/>
<dbReference type="Proteomes" id="UP000001423">
    <property type="component" value="Chromosome"/>
</dbReference>
<dbReference type="GO" id="GO:0005524">
    <property type="term" value="F:ATP binding"/>
    <property type="evidence" value="ECO:0007669"/>
    <property type="project" value="UniProtKB-KW"/>
</dbReference>
<dbReference type="GO" id="GO:0003677">
    <property type="term" value="F:DNA binding"/>
    <property type="evidence" value="ECO:0007669"/>
    <property type="project" value="UniProtKB-KW"/>
</dbReference>
<dbReference type="GO" id="GO:0008270">
    <property type="term" value="F:zinc ion binding"/>
    <property type="evidence" value="ECO:0007669"/>
    <property type="project" value="UniProtKB-UniRule"/>
</dbReference>
<dbReference type="GO" id="GO:0045892">
    <property type="term" value="P:negative regulation of DNA-templated transcription"/>
    <property type="evidence" value="ECO:0007669"/>
    <property type="project" value="UniProtKB-UniRule"/>
</dbReference>
<dbReference type="HAMAP" id="MF_00440">
    <property type="entry name" value="NrdR"/>
    <property type="match status" value="1"/>
</dbReference>
<dbReference type="InterPro" id="IPR005144">
    <property type="entry name" value="ATP-cone_dom"/>
</dbReference>
<dbReference type="InterPro" id="IPR055173">
    <property type="entry name" value="NrdR-like_N"/>
</dbReference>
<dbReference type="InterPro" id="IPR003796">
    <property type="entry name" value="RNR_NrdR-like"/>
</dbReference>
<dbReference type="NCBIfam" id="TIGR00244">
    <property type="entry name" value="transcriptional regulator NrdR"/>
    <property type="match status" value="1"/>
</dbReference>
<dbReference type="PANTHER" id="PTHR30455">
    <property type="entry name" value="TRANSCRIPTIONAL REPRESSOR NRDR"/>
    <property type="match status" value="1"/>
</dbReference>
<dbReference type="PANTHER" id="PTHR30455:SF2">
    <property type="entry name" value="TRANSCRIPTIONAL REPRESSOR NRDR"/>
    <property type="match status" value="1"/>
</dbReference>
<dbReference type="Pfam" id="PF03477">
    <property type="entry name" value="ATP-cone"/>
    <property type="match status" value="1"/>
</dbReference>
<dbReference type="Pfam" id="PF22811">
    <property type="entry name" value="Zn_ribbon_NrdR"/>
    <property type="match status" value="1"/>
</dbReference>
<dbReference type="PROSITE" id="PS51161">
    <property type="entry name" value="ATP_CONE"/>
    <property type="match status" value="1"/>
</dbReference>
<feature type="chain" id="PRO_0000182331" description="Transcriptional repressor NrdR">
    <location>
        <begin position="1"/>
        <end position="158"/>
    </location>
</feature>
<feature type="domain" description="ATP-cone" evidence="1">
    <location>
        <begin position="49"/>
        <end position="139"/>
    </location>
</feature>
<feature type="zinc finger region" evidence="1">
    <location>
        <begin position="3"/>
        <end position="34"/>
    </location>
</feature>
<sequence length="158" mass="18045">MQCPSCQNTDSRVLESRAADAGRSVRRRRECLHCDFRFTTYERVETVPITVLKRNGNRETFNRSKILNGLTLACQKTGLEQDRLESMVNELELQLQQRSGREVNSAEIGEMVLDQLSEMSEVAYVRFASVYRDFRGVNDFVAALEGIHANKEQLAAVR</sequence>
<proteinExistence type="inferred from homology"/>
<gene>
    <name evidence="1" type="primary">nrdR</name>
    <name type="ordered locus">PMT_1667</name>
</gene>
<organism>
    <name type="scientific">Prochlorococcus marinus (strain MIT 9313)</name>
    <dbReference type="NCBI Taxonomy" id="74547"/>
    <lineage>
        <taxon>Bacteria</taxon>
        <taxon>Bacillati</taxon>
        <taxon>Cyanobacteriota</taxon>
        <taxon>Cyanophyceae</taxon>
        <taxon>Synechococcales</taxon>
        <taxon>Prochlorococcaceae</taxon>
        <taxon>Prochlorococcus</taxon>
    </lineage>
</organism>
<keyword id="KW-0067">ATP-binding</keyword>
<keyword id="KW-0238">DNA-binding</keyword>
<keyword id="KW-0479">Metal-binding</keyword>
<keyword id="KW-0547">Nucleotide-binding</keyword>
<keyword id="KW-1185">Reference proteome</keyword>
<keyword id="KW-0678">Repressor</keyword>
<keyword id="KW-0804">Transcription</keyword>
<keyword id="KW-0805">Transcription regulation</keyword>
<keyword id="KW-0862">Zinc</keyword>
<keyword id="KW-0863">Zinc-finger</keyword>
<evidence type="ECO:0000255" key="1">
    <source>
        <dbReference type="HAMAP-Rule" id="MF_00440"/>
    </source>
</evidence>
<comment type="function">
    <text evidence="1">Negatively regulates transcription of bacterial ribonucleotide reductase nrd genes and operons by binding to NrdR-boxes.</text>
</comment>
<comment type="cofactor">
    <cofactor evidence="1">
        <name>Zn(2+)</name>
        <dbReference type="ChEBI" id="CHEBI:29105"/>
    </cofactor>
    <text evidence="1">Binds 1 zinc ion.</text>
</comment>
<comment type="similarity">
    <text evidence="1">Belongs to the NrdR family.</text>
</comment>